<sequence>MFQPAGHGQDWAMEGPRDGLKKERLVDDRHDSGLDSMKDEDYEQMVKELREIRLQPQEAPLAAEPWKQQLTEDGDSFLHLAIIHEEKTLTMEVIGQVKGDLAFLNFQNNLQQTPLHLAVITNQPGIAEALLKAGCDPELRDFRGNTPLHLACEQGCLASVAVLTQTCTPQHLHSVLQATNYNGHTCLHLASIHGYLGIVEHLVTLGADVNAQEPCNGRTALHLAVDLQNPDLVSLLLKCGADVNRVTYQGYSPYQLTWGRPSTRIQQQLGQLTLENLQTLPESEDEESYDTESEFTEDELPYDDCVFGGQRLTL</sequence>
<protein>
    <recommendedName>
        <fullName>NF-kappa-B inhibitor alpha</fullName>
    </recommendedName>
    <alternativeName>
        <fullName>I-kappa-B-alpha</fullName>
        <shortName>IkB-alpha</shortName>
        <shortName>IkappaBalpha</shortName>
    </alternativeName>
    <alternativeName>
        <fullName>RL/IF-1</fullName>
    </alternativeName>
</protein>
<keyword id="KW-0040">ANK repeat</keyword>
<keyword id="KW-0963">Cytoplasm</keyword>
<keyword id="KW-0379">Hydroxylation</keyword>
<keyword id="KW-1017">Isopeptide bond</keyword>
<keyword id="KW-0539">Nucleus</keyword>
<keyword id="KW-0597">Phosphoprotein</keyword>
<keyword id="KW-1185">Reference proteome</keyword>
<keyword id="KW-0677">Repeat</keyword>
<keyword id="KW-0832">Ubl conjugation</keyword>
<proteinExistence type="evidence at transcript level"/>
<gene>
    <name type="primary">Nfkbia</name>
    <name type="synonym">Ikba</name>
</gene>
<dbReference type="EMBL" id="X63594">
    <property type="protein sequence ID" value="CAA45138.1"/>
    <property type="molecule type" value="mRNA"/>
</dbReference>
<dbReference type="EMBL" id="CH473947">
    <property type="protein sequence ID" value="EDM03428.1"/>
    <property type="molecule type" value="Genomic_DNA"/>
</dbReference>
<dbReference type="EMBL" id="BC166886">
    <property type="protein sequence ID" value="AAI66886.1"/>
    <property type="molecule type" value="mRNA"/>
</dbReference>
<dbReference type="PIR" id="A44437">
    <property type="entry name" value="A44437"/>
</dbReference>
<dbReference type="RefSeq" id="NP_001099190.2">
    <property type="nucleotide sequence ID" value="NM_001105720.2"/>
</dbReference>
<dbReference type="SMR" id="Q63746"/>
<dbReference type="BioGRID" id="247526">
    <property type="interactions" value="3"/>
</dbReference>
<dbReference type="DIP" id="DIP-59941N"/>
<dbReference type="FunCoup" id="Q63746">
    <property type="interactions" value="471"/>
</dbReference>
<dbReference type="IntAct" id="Q63746">
    <property type="interactions" value="1"/>
</dbReference>
<dbReference type="STRING" id="10116.ENSRNOP00000009894"/>
<dbReference type="GlyGen" id="Q63746">
    <property type="glycosylation" value="1 site, 1 O-linked glycan (1 site)"/>
</dbReference>
<dbReference type="iPTMnet" id="Q63746"/>
<dbReference type="PhosphoSitePlus" id="Q63746"/>
<dbReference type="PaxDb" id="10116-ENSRNOP00000009894"/>
<dbReference type="Ensembl" id="ENSRNOT00000009894.7">
    <property type="protein sequence ID" value="ENSRNOP00000009894.5"/>
    <property type="gene ID" value="ENSRNOG00000007390.7"/>
</dbReference>
<dbReference type="GeneID" id="25493"/>
<dbReference type="KEGG" id="rno:25493"/>
<dbReference type="UCSC" id="RGD:3171">
    <property type="organism name" value="rat"/>
</dbReference>
<dbReference type="AGR" id="RGD:3171"/>
<dbReference type="CTD" id="4792"/>
<dbReference type="RGD" id="3171">
    <property type="gene designation" value="Nfkbia"/>
</dbReference>
<dbReference type="eggNOG" id="KOG0504">
    <property type="taxonomic scope" value="Eukaryota"/>
</dbReference>
<dbReference type="GeneTree" id="ENSGT00940000163080"/>
<dbReference type="HOGENOM" id="CLU_000134_6_3_1"/>
<dbReference type="InParanoid" id="Q63746"/>
<dbReference type="OrthoDB" id="42752at9989"/>
<dbReference type="PhylomeDB" id="Q63746"/>
<dbReference type="TreeFam" id="TF320166"/>
<dbReference type="Reactome" id="R-RNO-1169091">
    <property type="pathway name" value="Activation of NF-kappaB in B cells"/>
</dbReference>
<dbReference type="Reactome" id="R-RNO-1810476">
    <property type="pathway name" value="RIP-mediated NFkB activation via ZBP1"/>
</dbReference>
<dbReference type="Reactome" id="R-RNO-209560">
    <property type="pathway name" value="NF-kB is activated and signals survival"/>
</dbReference>
<dbReference type="Reactome" id="R-RNO-445989">
    <property type="pathway name" value="TAK1-dependent IKK and NF-kappa-B activation"/>
</dbReference>
<dbReference type="Reactome" id="R-RNO-4755510">
    <property type="pathway name" value="SUMOylation of immune response proteins"/>
</dbReference>
<dbReference type="Reactome" id="R-RNO-5689880">
    <property type="pathway name" value="Ub-specific processing proteases"/>
</dbReference>
<dbReference type="Reactome" id="R-RNO-9020702">
    <property type="pathway name" value="Interleukin-1 signaling"/>
</dbReference>
<dbReference type="Reactome" id="R-RNO-933542">
    <property type="pathway name" value="TRAF6 mediated NF-kB activation"/>
</dbReference>
<dbReference type="PRO" id="PR:Q63746"/>
<dbReference type="Proteomes" id="UP000002494">
    <property type="component" value="Chromosome 6"/>
</dbReference>
<dbReference type="Proteomes" id="UP000234681">
    <property type="component" value="Chromosome 6"/>
</dbReference>
<dbReference type="Bgee" id="ENSRNOG00000007390">
    <property type="expression patterns" value="Expressed in lung and 20 other cell types or tissues"/>
</dbReference>
<dbReference type="GO" id="GO:0005737">
    <property type="term" value="C:cytoplasm"/>
    <property type="evidence" value="ECO:0000266"/>
    <property type="project" value="RGD"/>
</dbReference>
<dbReference type="GO" id="GO:0005829">
    <property type="term" value="C:cytosol"/>
    <property type="evidence" value="ECO:0000314"/>
    <property type="project" value="MGI"/>
</dbReference>
<dbReference type="GO" id="GO:0033256">
    <property type="term" value="C:I-kappaB/NF-kappaB complex"/>
    <property type="evidence" value="ECO:0000266"/>
    <property type="project" value="RGD"/>
</dbReference>
<dbReference type="GO" id="GO:0005634">
    <property type="term" value="C:nucleus"/>
    <property type="evidence" value="ECO:0000266"/>
    <property type="project" value="RGD"/>
</dbReference>
<dbReference type="GO" id="GO:0032991">
    <property type="term" value="C:protein-containing complex"/>
    <property type="evidence" value="ECO:0000314"/>
    <property type="project" value="RGD"/>
</dbReference>
<dbReference type="GO" id="GO:0019899">
    <property type="term" value="F:enzyme binding"/>
    <property type="evidence" value="ECO:0000266"/>
    <property type="project" value="RGD"/>
</dbReference>
<dbReference type="GO" id="GO:0031072">
    <property type="term" value="F:heat shock protein binding"/>
    <property type="evidence" value="ECO:0000353"/>
    <property type="project" value="RGD"/>
</dbReference>
<dbReference type="GO" id="GO:0042802">
    <property type="term" value="F:identical protein binding"/>
    <property type="evidence" value="ECO:0000266"/>
    <property type="project" value="RGD"/>
</dbReference>
<dbReference type="GO" id="GO:0051059">
    <property type="term" value="F:NF-kappaB binding"/>
    <property type="evidence" value="ECO:0000353"/>
    <property type="project" value="RGD"/>
</dbReference>
<dbReference type="GO" id="GO:0008139">
    <property type="term" value="F:nuclear localization sequence binding"/>
    <property type="evidence" value="ECO:0000266"/>
    <property type="project" value="RGD"/>
</dbReference>
<dbReference type="GO" id="GO:0140311">
    <property type="term" value="F:protein sequestering activity"/>
    <property type="evidence" value="ECO:0000250"/>
    <property type="project" value="UniProtKB"/>
</dbReference>
<dbReference type="GO" id="GO:0044877">
    <property type="term" value="F:protein-containing complex binding"/>
    <property type="evidence" value="ECO:0000353"/>
    <property type="project" value="RGD"/>
</dbReference>
<dbReference type="GO" id="GO:0140416">
    <property type="term" value="F:transcription regulator inhibitor activity"/>
    <property type="evidence" value="ECO:0000266"/>
    <property type="project" value="RGD"/>
</dbReference>
<dbReference type="GO" id="GO:0031625">
    <property type="term" value="F:ubiquitin protein ligase binding"/>
    <property type="evidence" value="ECO:0000266"/>
    <property type="project" value="RGD"/>
</dbReference>
<dbReference type="GO" id="GO:0050853">
    <property type="term" value="P:B cell receptor signaling pathway"/>
    <property type="evidence" value="ECO:0000266"/>
    <property type="project" value="RGD"/>
</dbReference>
<dbReference type="GO" id="GO:0007249">
    <property type="term" value="P:canonical NF-kappaB signal transduction"/>
    <property type="evidence" value="ECO:0000266"/>
    <property type="project" value="RGD"/>
</dbReference>
<dbReference type="GO" id="GO:0071345">
    <property type="term" value="P:cellular response to cytokine stimulus"/>
    <property type="evidence" value="ECO:0000314"/>
    <property type="project" value="MGI"/>
</dbReference>
<dbReference type="GO" id="GO:0071356">
    <property type="term" value="P:cellular response to tumor necrosis factor"/>
    <property type="evidence" value="ECO:0000266"/>
    <property type="project" value="RGD"/>
</dbReference>
<dbReference type="GO" id="GO:0070498">
    <property type="term" value="P:interleukin-1-mediated signaling pathway"/>
    <property type="evidence" value="ECO:0000266"/>
    <property type="project" value="RGD"/>
</dbReference>
<dbReference type="GO" id="GO:0031663">
    <property type="term" value="P:lipopolysaccharide-mediated signaling pathway"/>
    <property type="evidence" value="ECO:0000266"/>
    <property type="project" value="RGD"/>
</dbReference>
<dbReference type="GO" id="GO:0097421">
    <property type="term" value="P:liver regeneration"/>
    <property type="evidence" value="ECO:0000270"/>
    <property type="project" value="RGD"/>
</dbReference>
<dbReference type="GO" id="GO:0043124">
    <property type="term" value="P:negative regulation of canonical NF-kappaB signal transduction"/>
    <property type="evidence" value="ECO:0000266"/>
    <property type="project" value="RGD"/>
</dbReference>
<dbReference type="GO" id="GO:0032375">
    <property type="term" value="P:negative regulation of cholesterol transport"/>
    <property type="evidence" value="ECO:0000266"/>
    <property type="project" value="RGD"/>
</dbReference>
<dbReference type="GO" id="GO:1900016">
    <property type="term" value="P:negative regulation of cytokine production involved in inflammatory response"/>
    <property type="evidence" value="ECO:0000266"/>
    <property type="project" value="RGD"/>
</dbReference>
<dbReference type="GO" id="GO:0010888">
    <property type="term" value="P:negative regulation of lipid storage"/>
    <property type="evidence" value="ECO:0000266"/>
    <property type="project" value="RGD"/>
</dbReference>
<dbReference type="GO" id="GO:0010745">
    <property type="term" value="P:negative regulation of macrophage derived foam cell differentiation"/>
    <property type="evidence" value="ECO:0000266"/>
    <property type="project" value="RGD"/>
</dbReference>
<dbReference type="GO" id="GO:0045638">
    <property type="term" value="P:negative regulation of myeloid cell differentiation"/>
    <property type="evidence" value="ECO:0000266"/>
    <property type="project" value="RGD"/>
</dbReference>
<dbReference type="GO" id="GO:0045746">
    <property type="term" value="P:negative regulation of Notch signaling pathway"/>
    <property type="evidence" value="ECO:0000266"/>
    <property type="project" value="RGD"/>
</dbReference>
<dbReference type="GO" id="GO:0042308">
    <property type="term" value="P:negative regulation of protein import into nucleus"/>
    <property type="evidence" value="ECO:0000266"/>
    <property type="project" value="RGD"/>
</dbReference>
<dbReference type="GO" id="GO:0000122">
    <property type="term" value="P:negative regulation of transcription by RNA polymerase II"/>
    <property type="evidence" value="ECO:0000266"/>
    <property type="project" value="RGD"/>
</dbReference>
<dbReference type="GO" id="GO:0038061">
    <property type="term" value="P:non-canonical NF-kappaB signal transduction"/>
    <property type="evidence" value="ECO:0000266"/>
    <property type="project" value="RGD"/>
</dbReference>
<dbReference type="GO" id="GO:0007219">
    <property type="term" value="P:Notch signaling pathway"/>
    <property type="evidence" value="ECO:0000266"/>
    <property type="project" value="RGD"/>
</dbReference>
<dbReference type="GO" id="GO:0070427">
    <property type="term" value="P:nucleotide-binding oligomerization domain containing 1 signaling pathway"/>
    <property type="evidence" value="ECO:0000266"/>
    <property type="project" value="RGD"/>
</dbReference>
<dbReference type="GO" id="GO:0070431">
    <property type="term" value="P:nucleotide-binding oligomerization domain containing 2 signaling pathway"/>
    <property type="evidence" value="ECO:0000266"/>
    <property type="project" value="RGD"/>
</dbReference>
<dbReference type="GO" id="GO:0045893">
    <property type="term" value="P:positive regulation of DNA-templated transcription"/>
    <property type="evidence" value="ECO:0000266"/>
    <property type="project" value="RGD"/>
</dbReference>
<dbReference type="GO" id="GO:0050729">
    <property type="term" value="P:positive regulation of inflammatory response"/>
    <property type="evidence" value="ECO:0000266"/>
    <property type="project" value="RGD"/>
</dbReference>
<dbReference type="GO" id="GO:0045944">
    <property type="term" value="P:positive regulation of transcription by RNA polymerase II"/>
    <property type="evidence" value="ECO:0000266"/>
    <property type="project" value="RGD"/>
</dbReference>
<dbReference type="GO" id="GO:0060261">
    <property type="term" value="P:positive regulation of transcription initiation by RNA polymerase II"/>
    <property type="evidence" value="ECO:0000266"/>
    <property type="project" value="RGD"/>
</dbReference>
<dbReference type="GO" id="GO:0006606">
    <property type="term" value="P:protein import into nucleus"/>
    <property type="evidence" value="ECO:0000266"/>
    <property type="project" value="RGD"/>
</dbReference>
<dbReference type="GO" id="GO:0042127">
    <property type="term" value="P:regulation of cell population proliferation"/>
    <property type="evidence" value="ECO:0000266"/>
    <property type="project" value="RGD"/>
</dbReference>
<dbReference type="GO" id="GO:0010468">
    <property type="term" value="P:regulation of gene expression"/>
    <property type="evidence" value="ECO:0000266"/>
    <property type="project" value="RGD"/>
</dbReference>
<dbReference type="GO" id="GO:0045471">
    <property type="term" value="P:response to ethanol"/>
    <property type="evidence" value="ECO:0000270"/>
    <property type="project" value="RGD"/>
</dbReference>
<dbReference type="GO" id="GO:0043330">
    <property type="term" value="P:response to exogenous dsRNA"/>
    <property type="evidence" value="ECO:0000266"/>
    <property type="project" value="RGD"/>
</dbReference>
<dbReference type="GO" id="GO:0032496">
    <property type="term" value="P:response to lipopolysaccharide"/>
    <property type="evidence" value="ECO:0000266"/>
    <property type="project" value="RGD"/>
</dbReference>
<dbReference type="GO" id="GO:0032495">
    <property type="term" value="P:response to muramyl dipeptide"/>
    <property type="evidence" value="ECO:0000266"/>
    <property type="project" value="RGD"/>
</dbReference>
<dbReference type="GO" id="GO:0035994">
    <property type="term" value="P:response to muscle stretch"/>
    <property type="evidence" value="ECO:0000266"/>
    <property type="project" value="RGD"/>
</dbReference>
<dbReference type="GO" id="GO:0023019">
    <property type="term" value="P:signal transduction involved in regulation of gene expression"/>
    <property type="evidence" value="ECO:0000266"/>
    <property type="project" value="RGD"/>
</dbReference>
<dbReference type="GO" id="GO:0034142">
    <property type="term" value="P:toll-like receptor 4 signaling pathway"/>
    <property type="evidence" value="ECO:0000266"/>
    <property type="project" value="RGD"/>
</dbReference>
<dbReference type="GO" id="GO:0033209">
    <property type="term" value="P:tumor necrosis factor-mediated signaling pathway"/>
    <property type="evidence" value="ECO:0000266"/>
    <property type="project" value="RGD"/>
</dbReference>
<dbReference type="FunFam" id="1.25.40.20:FF:000124">
    <property type="entry name" value="NF-kappa-B inhibitor alpha isoform X2"/>
    <property type="match status" value="1"/>
</dbReference>
<dbReference type="Gene3D" id="1.25.40.20">
    <property type="entry name" value="Ankyrin repeat-containing domain"/>
    <property type="match status" value="1"/>
</dbReference>
<dbReference type="InterPro" id="IPR002110">
    <property type="entry name" value="Ankyrin_rpt"/>
</dbReference>
<dbReference type="InterPro" id="IPR036770">
    <property type="entry name" value="Ankyrin_rpt-contain_sf"/>
</dbReference>
<dbReference type="InterPro" id="IPR051070">
    <property type="entry name" value="NF-kappa-B_inhibitor"/>
</dbReference>
<dbReference type="PANTHER" id="PTHR46680">
    <property type="entry name" value="NF-KAPPA-B INHIBITOR ALPHA"/>
    <property type="match status" value="1"/>
</dbReference>
<dbReference type="PANTHER" id="PTHR46680:SF1">
    <property type="entry name" value="NF-KAPPA-B INHIBITOR ALPHA"/>
    <property type="match status" value="1"/>
</dbReference>
<dbReference type="Pfam" id="PF12796">
    <property type="entry name" value="Ank_2"/>
    <property type="match status" value="1"/>
</dbReference>
<dbReference type="Pfam" id="PF13857">
    <property type="entry name" value="Ank_5"/>
    <property type="match status" value="1"/>
</dbReference>
<dbReference type="PRINTS" id="PR01415">
    <property type="entry name" value="ANKYRIN"/>
</dbReference>
<dbReference type="SMART" id="SM00248">
    <property type="entry name" value="ANK"/>
    <property type="match status" value="5"/>
</dbReference>
<dbReference type="SUPFAM" id="SSF48403">
    <property type="entry name" value="Ankyrin repeat"/>
    <property type="match status" value="1"/>
</dbReference>
<dbReference type="PROSITE" id="PS50297">
    <property type="entry name" value="ANK_REP_REGION"/>
    <property type="match status" value="1"/>
</dbReference>
<dbReference type="PROSITE" id="PS50088">
    <property type="entry name" value="ANK_REPEAT"/>
    <property type="match status" value="3"/>
</dbReference>
<evidence type="ECO:0000250" key="1">
    <source>
        <dbReference type="UniProtKB" id="P25963"/>
    </source>
</evidence>
<evidence type="ECO:0000250" key="2">
    <source>
        <dbReference type="UniProtKB" id="Q9Z1E3"/>
    </source>
</evidence>
<evidence type="ECO:0000255" key="3"/>
<evidence type="ECO:0000256" key="4">
    <source>
        <dbReference type="SAM" id="MobiDB-lite"/>
    </source>
</evidence>
<evidence type="ECO:0000269" key="5">
    <source>
    </source>
</evidence>
<evidence type="ECO:0000305" key="6"/>
<accession>Q63746</accession>
<accession>B2RYS5</accession>
<reference key="1">
    <citation type="journal article" date="1992" name="Nucleic Acids Res.">
        <title>Sequence of rat RL/IF-1 encoding an IkappaB, and comparison with related proteins containing Notch-like repeats.</title>
        <authorList>
            <person name="Tewari M."/>
            <person name="Mohn K.L."/>
            <person name="Yue F.E."/>
            <person name="Taub R.A."/>
        </authorList>
    </citation>
    <scope>NUCLEOTIDE SEQUENCE [MRNA]</scope>
</reference>
<reference key="2">
    <citation type="journal article" date="1992" name="Nucleic Acids Res.">
        <authorList>
            <person name="Tewari M."/>
            <person name="Mohn K.L."/>
            <person name="Yue F.E."/>
            <person name="Taub R.A."/>
        </authorList>
    </citation>
    <scope>ERRATUM OF PUBMED:1741294</scope>
</reference>
<reference key="3">
    <citation type="journal article" date="1992" name="Nucleic Acids Res.">
        <authorList>
            <person name="Tewari M."/>
            <person name="Mohn K.L."/>
            <person name="Yue F.E."/>
            <person name="Taub R.A."/>
        </authorList>
    </citation>
    <scope>ERRATUM OF PUBMED:1741294</scope>
</reference>
<reference key="4">
    <citation type="submission" date="2005-07" db="EMBL/GenBank/DDBJ databases">
        <authorList>
            <person name="Mural R.J."/>
            <person name="Adams M.D."/>
            <person name="Myers E.W."/>
            <person name="Smith H.O."/>
            <person name="Venter J.C."/>
        </authorList>
    </citation>
    <scope>NUCLEOTIDE SEQUENCE [LARGE SCALE GENOMIC DNA]</scope>
</reference>
<reference key="5">
    <citation type="journal article" date="2004" name="Genome Res.">
        <title>The status, quality, and expansion of the NIH full-length cDNA project: the Mammalian Gene Collection (MGC).</title>
        <authorList>
            <consortium name="The MGC Project Team"/>
        </authorList>
    </citation>
    <scope>NUCLEOTIDE SEQUENCE [LARGE SCALE MRNA]</scope>
    <source>
        <tissue>Pituitary</tissue>
    </source>
</reference>
<reference key="6">
    <citation type="journal article" date="1992" name="Mol. Cell. Biol.">
        <title>Rapid induction in regenerating liver of RL/IF-1 (an I kappa B that inhibits NF-kappa B, RelB-p50, and c-Rel-p50) and PHF, a novel kappa B site-binding complex.</title>
        <authorList>
            <person name="Tewari M."/>
            <person name="Dobrzanski P."/>
            <person name="Mohn K.L."/>
            <person name="Cressman D.E."/>
            <person name="Hsu J.C."/>
            <person name="Bravo R."/>
            <person name="Taub R."/>
        </authorList>
    </citation>
    <scope>INDUCTION</scope>
</reference>
<name>IKBA_RAT</name>
<feature type="chain" id="PRO_0000067002" description="NF-kappa-B inhibitor alpha">
    <location>
        <begin position="1"/>
        <end position="314"/>
    </location>
</feature>
<feature type="repeat" description="ANK 1">
    <location>
        <begin position="110"/>
        <end position="139"/>
    </location>
</feature>
<feature type="repeat" description="ANK 2">
    <location>
        <begin position="143"/>
        <end position="172"/>
    </location>
</feature>
<feature type="repeat" description="ANK 3">
    <location>
        <begin position="182"/>
        <end position="211"/>
    </location>
</feature>
<feature type="repeat" description="ANK 4">
    <location>
        <begin position="216"/>
        <end position="245"/>
    </location>
</feature>
<feature type="region of interest" description="Disordered" evidence="4">
    <location>
        <begin position="1"/>
        <end position="39"/>
    </location>
</feature>
<feature type="short sequence motif" description="Destruction motif" evidence="1">
    <location>
        <begin position="30"/>
        <end position="36"/>
    </location>
</feature>
<feature type="short sequence motif" description="Nuclear export signal" evidence="1">
    <location>
        <begin position="45"/>
        <end position="54"/>
    </location>
</feature>
<feature type="short sequence motif" description="Nuclear import signal" evidence="1">
    <location>
        <begin position="110"/>
        <end position="120"/>
    </location>
</feature>
<feature type="compositionally biased region" description="Basic and acidic residues" evidence="4">
    <location>
        <begin position="15"/>
        <end position="39"/>
    </location>
</feature>
<feature type="modified residue" description="Phosphoserine; by IKKA and IKKB" evidence="1">
    <location>
        <position position="32"/>
    </location>
</feature>
<feature type="modified residue" description="Phosphoserine; by IKKA, IKKB, IKKE and TBK1" evidence="1">
    <location>
        <position position="36"/>
    </location>
</feature>
<feature type="modified residue" description="Phosphotyrosine; by Tyr-kinases" evidence="1">
    <location>
        <position position="42"/>
    </location>
</feature>
<feature type="modified residue" description="(3S)-3-hydroxyasparagine; by HIF1AN" evidence="1">
    <location>
        <position position="210"/>
    </location>
</feature>
<feature type="modified residue" description="(3S)-3-hydroxyasparagine; by HIF1AN" evidence="1">
    <location>
        <position position="244"/>
    </location>
</feature>
<feature type="modified residue" description="Phosphoserine; by CK2" evidence="1">
    <location>
        <position position="283"/>
    </location>
</feature>
<feature type="modified residue" description="Phosphoserine; by CK2" evidence="1">
    <location>
        <position position="288"/>
    </location>
</feature>
<feature type="modified residue" description="Phosphothreonine; by CK2" evidence="1">
    <location>
        <position position="291"/>
    </location>
</feature>
<feature type="modified residue" description="Phosphoserine; by CK2" evidence="1">
    <location>
        <position position="293"/>
    </location>
</feature>
<feature type="modified residue" description="Phosphothreonine" evidence="1">
    <location>
        <position position="296"/>
    </location>
</feature>
<feature type="cross-link" description="Glycyl lysine isopeptide (Lys-Gly) (interchain with G-Cter in SUMO); alternate" evidence="2">
    <location>
        <position position="21"/>
    </location>
</feature>
<feature type="cross-link" description="Glycyl lysine isopeptide (Lys-Gly) (interchain with G-Cter in ubiquitin); alternate" evidence="2">
    <location>
        <position position="21"/>
    </location>
</feature>
<feature type="cross-link" description="Glycyl lysine isopeptide (Lys-Gly) (interchain with G-Cter in ubiquitin)" evidence="1 3">
    <location>
        <position position="22"/>
    </location>
</feature>
<comment type="function">
    <text evidence="1">Inhibits the activity of dimeric NF-kappa-B/REL complexes by trapping REL (RELA/p65 and NFKB1/p50) dimers in the cytoplasm by masking their nuclear localization signals. On cellular stimulation by immune and pro-inflammatory responses, becomes phosphorylated promoting ubiquitination and degradation, enabling the dimeric RELA to translocate to the nucleus and activate transcription.</text>
</comment>
<comment type="subunit">
    <text evidence="1">Interacts with RELA; the interaction requires the nuclear import signal. Part of a 70-90 kDa complex at least consisting of CHUK, IKBKB, NFKBIA, RELA, ELP1 and MAP3K14. Interacts with NKIRAS1 and NKIRAS2. Interacts with RWDD3; the interaction enhances sumoylation. Interacts with PRMT2. Interacts with PRKACA in platelets; this interaction is disrupted by thrombin and collagen. Interacts with MEFV. Interacts with DDRGK1; positively regulates NFKBIA phosphorylation and degradation. Interacts with HNRNPA2B1; the interaction may be mediated by the RRM2 domain of HNRNPA2B1, and HNRNPA2B1 may interact simultaneously with FAM76B and either NFKBIA or NFKBIE to form a complex.</text>
</comment>
<comment type="subcellular location">
    <subcellularLocation>
        <location evidence="1">Cytoplasm</location>
    </subcellularLocation>
    <subcellularLocation>
        <location evidence="1">Nucleus</location>
    </subcellularLocation>
    <text evidence="1">Shuttles between the nucleus and the cytoplasm by a nuclear localization signal (NLS) and a CRM1-dependent nuclear export.</text>
</comment>
<comment type="induction">
    <text evidence="5">During liver regeneration.</text>
</comment>
<comment type="PTM">
    <text evidence="1">Phosphorylated at Ser-32 and Ser-36 by IKKA/CHUK and IKKB/IKBKB; disables inhibition of NF-kappa-B DNA-binding activity. Phosphorylation at positions 32 and 36 is prerequisite to recognition by the SCF(FBXW11) and SCF(BTRC) complexes, leading to polyubiquitination and subsequent degradation.</text>
</comment>
<comment type="PTM">
    <text evidence="1">Polyubiquitinated at Lys-21 and/or Lys-22 following phosphorylation at Ser-32 and Ser-36. Monoubiquitinated at Lys-21 and/or Lys-22 by UBE2D3. Ubiquitin chain elongation is then performed by CDC34 in cooperation with the SCF(FBXW11) E3 ligase complex, building ubiquitin chains from the UBE2D3-primed NFKBIA-linked ubiquitin. The resulting polyubiquitination leads to protein degradation. Also ubiquitinated by the SCF(BTRC) complex following stimulus-dependent phosphorylation at Ser-32 and Ser-36. Deubiquitinated by USP38, leading to NF-kappa-B inhibition (By similarity).</text>
</comment>
<comment type="PTM">
    <text evidence="1">Sumoylated; sumoylation requires the presence of the nuclear import signal. Sumoylation blocks ubiquitination and proteasome-mediated degradation of the protein thereby increasing the protein stability.</text>
</comment>
<comment type="PTM">
    <text evidence="1">Hydroxylated by HIF1AN.</text>
</comment>
<comment type="similarity">
    <text evidence="6">Belongs to the NF-kappa-B inhibitor family.</text>
</comment>
<organism>
    <name type="scientific">Rattus norvegicus</name>
    <name type="common">Rat</name>
    <dbReference type="NCBI Taxonomy" id="10116"/>
    <lineage>
        <taxon>Eukaryota</taxon>
        <taxon>Metazoa</taxon>
        <taxon>Chordata</taxon>
        <taxon>Craniata</taxon>
        <taxon>Vertebrata</taxon>
        <taxon>Euteleostomi</taxon>
        <taxon>Mammalia</taxon>
        <taxon>Eutheria</taxon>
        <taxon>Euarchontoglires</taxon>
        <taxon>Glires</taxon>
        <taxon>Rodentia</taxon>
        <taxon>Myomorpha</taxon>
        <taxon>Muroidea</taxon>
        <taxon>Muridae</taxon>
        <taxon>Murinae</taxon>
        <taxon>Rattus</taxon>
    </lineage>
</organism>